<organism>
    <name type="scientific">Pseudomonas putida (strain GB-1)</name>
    <dbReference type="NCBI Taxonomy" id="76869"/>
    <lineage>
        <taxon>Bacteria</taxon>
        <taxon>Pseudomonadati</taxon>
        <taxon>Pseudomonadota</taxon>
        <taxon>Gammaproteobacteria</taxon>
        <taxon>Pseudomonadales</taxon>
        <taxon>Pseudomonadaceae</taxon>
        <taxon>Pseudomonas</taxon>
    </lineage>
</organism>
<name>RS16_PSEPG</name>
<keyword id="KW-0687">Ribonucleoprotein</keyword>
<keyword id="KW-0689">Ribosomal protein</keyword>
<protein>
    <recommendedName>
        <fullName evidence="1">Small ribosomal subunit protein bS16</fullName>
    </recommendedName>
    <alternativeName>
        <fullName evidence="2">30S ribosomal protein S16</fullName>
    </alternativeName>
</protein>
<reference key="1">
    <citation type="submission" date="2008-01" db="EMBL/GenBank/DDBJ databases">
        <title>Complete sequence of Pseudomonas putida GB-1.</title>
        <authorList>
            <consortium name="US DOE Joint Genome Institute"/>
            <person name="Copeland A."/>
            <person name="Lucas S."/>
            <person name="Lapidus A."/>
            <person name="Barry K."/>
            <person name="Glavina del Rio T."/>
            <person name="Dalin E."/>
            <person name="Tice H."/>
            <person name="Pitluck S."/>
            <person name="Bruce D."/>
            <person name="Goodwin L."/>
            <person name="Chertkov O."/>
            <person name="Brettin T."/>
            <person name="Detter J.C."/>
            <person name="Han C."/>
            <person name="Kuske C.R."/>
            <person name="Schmutz J."/>
            <person name="Larimer F."/>
            <person name="Land M."/>
            <person name="Hauser L."/>
            <person name="Kyrpides N."/>
            <person name="Kim E."/>
            <person name="McCarthy J.K."/>
            <person name="Richardson P."/>
        </authorList>
    </citation>
    <scope>NUCLEOTIDE SEQUENCE [LARGE SCALE GENOMIC DNA]</scope>
    <source>
        <strain>GB-1</strain>
    </source>
</reference>
<accession>B0KRI1</accession>
<proteinExistence type="inferred from homology"/>
<sequence length="83" mass="9189">MVTIRLARGGSKKRPFYHLTVTNSRNARDGRFVERVGFFNPIAAGAEVKLSVNQERVTYWLSQGAQPSERVAQLLKEAAKAAA</sequence>
<comment type="similarity">
    <text evidence="1">Belongs to the bacterial ribosomal protein bS16 family.</text>
</comment>
<dbReference type="EMBL" id="CP000926">
    <property type="protein sequence ID" value="ABY96975.1"/>
    <property type="molecule type" value="Genomic_DNA"/>
</dbReference>
<dbReference type="RefSeq" id="WP_003252142.1">
    <property type="nucleotide sequence ID" value="NC_010322.1"/>
</dbReference>
<dbReference type="SMR" id="B0KRI1"/>
<dbReference type="GeneID" id="83682003"/>
<dbReference type="KEGG" id="ppg:PputGB1_1067"/>
<dbReference type="eggNOG" id="COG0228">
    <property type="taxonomic scope" value="Bacteria"/>
</dbReference>
<dbReference type="HOGENOM" id="CLU_100590_5_1_6"/>
<dbReference type="Proteomes" id="UP000002157">
    <property type="component" value="Chromosome"/>
</dbReference>
<dbReference type="GO" id="GO:0005737">
    <property type="term" value="C:cytoplasm"/>
    <property type="evidence" value="ECO:0007669"/>
    <property type="project" value="UniProtKB-ARBA"/>
</dbReference>
<dbReference type="GO" id="GO:0015935">
    <property type="term" value="C:small ribosomal subunit"/>
    <property type="evidence" value="ECO:0007669"/>
    <property type="project" value="TreeGrafter"/>
</dbReference>
<dbReference type="GO" id="GO:0003735">
    <property type="term" value="F:structural constituent of ribosome"/>
    <property type="evidence" value="ECO:0007669"/>
    <property type="project" value="InterPro"/>
</dbReference>
<dbReference type="GO" id="GO:0006412">
    <property type="term" value="P:translation"/>
    <property type="evidence" value="ECO:0007669"/>
    <property type="project" value="UniProtKB-UniRule"/>
</dbReference>
<dbReference type="FunFam" id="3.30.1320.10:FF:000001">
    <property type="entry name" value="30S ribosomal protein S16"/>
    <property type="match status" value="1"/>
</dbReference>
<dbReference type="Gene3D" id="3.30.1320.10">
    <property type="match status" value="1"/>
</dbReference>
<dbReference type="HAMAP" id="MF_00385">
    <property type="entry name" value="Ribosomal_bS16"/>
    <property type="match status" value="1"/>
</dbReference>
<dbReference type="InterPro" id="IPR000307">
    <property type="entry name" value="Ribosomal_bS16"/>
</dbReference>
<dbReference type="InterPro" id="IPR023803">
    <property type="entry name" value="Ribosomal_bS16_dom_sf"/>
</dbReference>
<dbReference type="NCBIfam" id="TIGR00002">
    <property type="entry name" value="S16"/>
    <property type="match status" value="1"/>
</dbReference>
<dbReference type="PANTHER" id="PTHR12919">
    <property type="entry name" value="30S RIBOSOMAL PROTEIN S16"/>
    <property type="match status" value="1"/>
</dbReference>
<dbReference type="PANTHER" id="PTHR12919:SF20">
    <property type="entry name" value="SMALL RIBOSOMAL SUBUNIT PROTEIN BS16M"/>
    <property type="match status" value="1"/>
</dbReference>
<dbReference type="Pfam" id="PF00886">
    <property type="entry name" value="Ribosomal_S16"/>
    <property type="match status" value="1"/>
</dbReference>
<dbReference type="SUPFAM" id="SSF54565">
    <property type="entry name" value="Ribosomal protein S16"/>
    <property type="match status" value="1"/>
</dbReference>
<evidence type="ECO:0000255" key="1">
    <source>
        <dbReference type="HAMAP-Rule" id="MF_00385"/>
    </source>
</evidence>
<evidence type="ECO:0000305" key="2"/>
<feature type="chain" id="PRO_1000080163" description="Small ribosomal subunit protein bS16">
    <location>
        <begin position="1"/>
        <end position="83"/>
    </location>
</feature>
<gene>
    <name evidence="1" type="primary">rpsP</name>
    <name type="ordered locus">PputGB1_1067</name>
</gene>